<accession>Q7K8C0</accession>
<dbReference type="EMBL" id="AJ492923">
    <property type="protein sequence ID" value="CAD37815.1"/>
    <property type="molecule type" value="Genomic_DNA"/>
</dbReference>
<dbReference type="EMBL" id="AJ492924">
    <property type="protein sequence ID" value="CAD37819.1"/>
    <property type="molecule type" value="Genomic_DNA"/>
</dbReference>
<dbReference type="EMBL" id="AJ492925">
    <property type="protein sequence ID" value="CAD37823.1"/>
    <property type="molecule type" value="Genomic_DNA"/>
</dbReference>
<dbReference type="EMBL" id="AY267754">
    <property type="protein sequence ID" value="AAP94673.1"/>
    <property type="molecule type" value="Genomic_DNA"/>
</dbReference>
<dbReference type="RefSeq" id="XP_071151067.1">
    <property type="nucleotide sequence ID" value="XM_071294966.1"/>
</dbReference>
<dbReference type="RefSeq" id="XP_071151071.1">
    <property type="nucleotide sequence ID" value="XM_071294970.1"/>
</dbReference>
<dbReference type="RefSeq" id="XP_071151073.1">
    <property type="nucleotide sequence ID" value="XM_071294972.1"/>
</dbReference>
<dbReference type="RefSeq" id="XP_071151074.1">
    <property type="nucleotide sequence ID" value="XM_071294973.1"/>
</dbReference>
<dbReference type="RefSeq" id="XP_071151149.1">
    <property type="nucleotide sequence ID" value="XM_071295048.1"/>
</dbReference>
<dbReference type="RefSeq" id="XP_071151373.1">
    <property type="nucleotide sequence ID" value="XM_071295272.1"/>
</dbReference>
<dbReference type="RefSeq" id="XP_071151376.1">
    <property type="nucleotide sequence ID" value="XM_071295275.1"/>
</dbReference>
<dbReference type="RefSeq" id="XP_071151949.1">
    <property type="nucleotide sequence ID" value="XM_071295848.1"/>
</dbReference>
<dbReference type="RefSeq" id="XP_071151951.1">
    <property type="nucleotide sequence ID" value="XM_071295850.1"/>
</dbReference>
<dbReference type="RefSeq" id="XP_071151953.1">
    <property type="nucleotide sequence ID" value="XM_071295852.1"/>
</dbReference>
<dbReference type="RefSeq" id="XP_071152212.1">
    <property type="nucleotide sequence ID" value="XM_071296111.1"/>
</dbReference>
<dbReference type="RefSeq" id="XP_071152213.1">
    <property type="nucleotide sequence ID" value="XM_071296112.1"/>
</dbReference>
<dbReference type="RefSeq" id="XP_071152215.1">
    <property type="nucleotide sequence ID" value="XM_071296114.1"/>
</dbReference>
<dbReference type="RefSeq" id="XP_071152241.1">
    <property type="nucleotide sequence ID" value="XM_071296140.1"/>
</dbReference>
<dbReference type="RefSeq" id="XP_071152244.1">
    <property type="nucleotide sequence ID" value="XM_071296143.1"/>
</dbReference>
<dbReference type="RefSeq" id="XP_071172071.1">
    <property type="nucleotide sequence ID" value="XM_071315970.1"/>
</dbReference>
<dbReference type="RefSeq" id="XP_071174772.1">
    <property type="nucleotide sequence ID" value="XM_071318671.1"/>
</dbReference>
<dbReference type="RefSeq" id="XP_071174773.1">
    <property type="nucleotide sequence ID" value="XM_071318672.1"/>
</dbReference>
<dbReference type="RefSeq" id="XP_071174774.1">
    <property type="nucleotide sequence ID" value="XM_071318673.1"/>
</dbReference>
<dbReference type="SMR" id="Q7K8C0"/>
<dbReference type="GeneID" id="139505205"/>
<dbReference type="GeneID" id="139505210"/>
<dbReference type="GeneID" id="139505212"/>
<dbReference type="GeneID" id="139505213"/>
<dbReference type="GeneID" id="139505496"/>
<dbReference type="GeneID" id="139505944"/>
<dbReference type="GeneID" id="139505946"/>
<dbReference type="GeneID" id="139507660"/>
<dbReference type="GeneID" id="139507664"/>
<dbReference type="GeneID" id="139507666"/>
<dbReference type="GeneID" id="139509200"/>
<dbReference type="GeneID" id="139509201"/>
<dbReference type="GeneID" id="139509204"/>
<dbReference type="GeneID" id="139509346"/>
<dbReference type="GeneID" id="139509350"/>
<dbReference type="GeneID" id="139522467"/>
<dbReference type="GeneID" id="139524102"/>
<dbReference type="GeneID" id="139524103"/>
<dbReference type="GeneID" id="139524104"/>
<dbReference type="GO" id="GO:0000786">
    <property type="term" value="C:nucleosome"/>
    <property type="evidence" value="ECO:0007669"/>
    <property type="project" value="UniProtKB-KW"/>
</dbReference>
<dbReference type="GO" id="GO:0005634">
    <property type="term" value="C:nucleus"/>
    <property type="evidence" value="ECO:0007669"/>
    <property type="project" value="UniProtKB-SubCell"/>
</dbReference>
<dbReference type="GO" id="GO:0003677">
    <property type="term" value="F:DNA binding"/>
    <property type="evidence" value="ECO:0007669"/>
    <property type="project" value="UniProtKB-KW"/>
</dbReference>
<dbReference type="GO" id="GO:0046982">
    <property type="term" value="F:protein heterodimerization activity"/>
    <property type="evidence" value="ECO:0007669"/>
    <property type="project" value="InterPro"/>
</dbReference>
<dbReference type="GO" id="GO:0030527">
    <property type="term" value="F:structural constituent of chromatin"/>
    <property type="evidence" value="ECO:0007669"/>
    <property type="project" value="InterPro"/>
</dbReference>
<dbReference type="CDD" id="cd22912">
    <property type="entry name" value="HFD_H4"/>
    <property type="match status" value="1"/>
</dbReference>
<dbReference type="FunFam" id="1.10.20.10:FF:000002">
    <property type="entry name" value="Histone H4"/>
    <property type="match status" value="1"/>
</dbReference>
<dbReference type="Gene3D" id="1.10.20.10">
    <property type="entry name" value="Histone, subunit A"/>
    <property type="match status" value="1"/>
</dbReference>
<dbReference type="InterPro" id="IPR035425">
    <property type="entry name" value="CENP-T/H4_C"/>
</dbReference>
<dbReference type="InterPro" id="IPR009072">
    <property type="entry name" value="Histone-fold"/>
</dbReference>
<dbReference type="InterPro" id="IPR001951">
    <property type="entry name" value="Histone_H4"/>
</dbReference>
<dbReference type="InterPro" id="IPR019809">
    <property type="entry name" value="Histone_H4_CS"/>
</dbReference>
<dbReference type="InterPro" id="IPR004823">
    <property type="entry name" value="TAF_TATA-bd_Histone-like_dom"/>
</dbReference>
<dbReference type="PANTHER" id="PTHR10484">
    <property type="entry name" value="HISTONE H4"/>
    <property type="match status" value="1"/>
</dbReference>
<dbReference type="Pfam" id="PF15511">
    <property type="entry name" value="CENP-T_C"/>
    <property type="match status" value="1"/>
</dbReference>
<dbReference type="PRINTS" id="PR00623">
    <property type="entry name" value="HISTONEH4"/>
</dbReference>
<dbReference type="SMART" id="SM00417">
    <property type="entry name" value="H4"/>
    <property type="match status" value="1"/>
</dbReference>
<dbReference type="SMART" id="SM00803">
    <property type="entry name" value="TAF"/>
    <property type="match status" value="1"/>
</dbReference>
<dbReference type="SUPFAM" id="SSF47113">
    <property type="entry name" value="Histone-fold"/>
    <property type="match status" value="1"/>
</dbReference>
<dbReference type="PROSITE" id="PS00047">
    <property type="entry name" value="HISTONE_H4"/>
    <property type="match status" value="1"/>
</dbReference>
<reference key="1">
    <citation type="submission" date="2002-07" db="EMBL/GenBank/DDBJ databases">
        <authorList>
            <person name="Albig W."/>
            <person name="Warthorst U."/>
            <person name="Drabent B."/>
            <person name="Parts E."/>
            <person name="Cornudella L."/>
            <person name="Doenecke D."/>
        </authorList>
    </citation>
    <scope>NUCLEOTIDE SEQUENCE [GENOMIC DNA]</scope>
</reference>
<reference key="2">
    <citation type="journal article" date="2004" name="J. Mol. Evol.">
        <title>Molecular evolutionary characterization of the mussel Mytilus histone multigene family: first record of a tandemly repeated unit of five histone genes containing an H1 subtype with 'orphon' features.</title>
        <authorList>
            <person name="Eirin-Lopez J.M."/>
            <person name="Ruiz F."/>
            <person name="Gonzalez-Tizon A.M."/>
            <person name="Martinez A."/>
            <person name="Sanchez L."/>
            <person name="Mendez J."/>
        </authorList>
    </citation>
    <scope>NUCLEOTIDE SEQUENCE [GENOMIC DNA]</scope>
</reference>
<organism>
    <name type="scientific">Mytilus edulis</name>
    <name type="common">Blue mussel</name>
    <dbReference type="NCBI Taxonomy" id="6550"/>
    <lineage>
        <taxon>Eukaryota</taxon>
        <taxon>Metazoa</taxon>
        <taxon>Spiralia</taxon>
        <taxon>Lophotrochozoa</taxon>
        <taxon>Mollusca</taxon>
        <taxon>Bivalvia</taxon>
        <taxon>Autobranchia</taxon>
        <taxon>Pteriomorphia</taxon>
        <taxon>Mytilida</taxon>
        <taxon>Mytiloidea</taxon>
        <taxon>Mytilidae</taxon>
        <taxon>Mytilinae</taxon>
        <taxon>Mytilus</taxon>
    </lineage>
</organism>
<proteinExistence type="inferred from homology"/>
<sequence length="103" mass="11367">MSGRGKGGKGLGKGGAKRHRKVLRDNIQGITKPAIRRLARRGGVKRISGLIYEETRGVLKVFLENVIRDAVTYTEHAKRKTVTAMDVVYALKRQGRTLYGFGG</sequence>
<evidence type="ECO:0000250" key="1"/>
<evidence type="ECO:0000250" key="2">
    <source>
        <dbReference type="UniProtKB" id="P62805"/>
    </source>
</evidence>
<evidence type="ECO:0000256" key="3">
    <source>
        <dbReference type="SAM" id="MobiDB-lite"/>
    </source>
</evidence>
<evidence type="ECO:0000305" key="4"/>
<feature type="initiator methionine" description="Removed" evidence="1">
    <location>
        <position position="1"/>
    </location>
</feature>
<feature type="chain" id="PRO_0000158333" description="Histone H4">
    <location>
        <begin position="2"/>
        <end position="103"/>
    </location>
</feature>
<feature type="DNA-binding region">
    <location>
        <begin position="17"/>
        <end position="21"/>
    </location>
</feature>
<feature type="region of interest" description="Disordered" evidence="3">
    <location>
        <begin position="1"/>
        <end position="20"/>
    </location>
</feature>
<feature type="compositionally biased region" description="Gly residues" evidence="3">
    <location>
        <begin position="1"/>
        <end position="14"/>
    </location>
</feature>
<feature type="modified residue" description="N-acetylserine" evidence="1">
    <location>
        <position position="2"/>
    </location>
</feature>
<feature type="modified residue" description="N6-acetyl-N6-methyllysine; alternate" evidence="2">
    <location>
        <position position="6"/>
    </location>
</feature>
<feature type="modified residue" description="N6-acetyl-N6-methyllysine; alternate" evidence="2">
    <location>
        <position position="13"/>
    </location>
</feature>
<feature type="modified residue" description="N6-acetyllysine" evidence="1">
    <location>
        <position position="17"/>
    </location>
</feature>
<feature type="modified residue" description="N6-methyllysine" evidence="1">
    <location>
        <position position="21"/>
    </location>
</feature>
<protein>
    <recommendedName>
        <fullName>Histone H4</fullName>
    </recommendedName>
</protein>
<keyword id="KW-0007">Acetylation</keyword>
<keyword id="KW-0158">Chromosome</keyword>
<keyword id="KW-0238">DNA-binding</keyword>
<keyword id="KW-0488">Methylation</keyword>
<keyword id="KW-0544">Nucleosome core</keyword>
<keyword id="KW-0539">Nucleus</keyword>
<name>H4_MYTED</name>
<comment type="function">
    <text>Core component of nucleosome. Nucleosomes wrap and compact DNA into chromatin, limiting DNA accessibility to the cellular machineries which require DNA as a template. Histones thereby play a central role in transcription regulation, DNA repair, DNA replication and chromosomal stability. DNA accessibility is regulated via a complex set of post-translational modifications of histones, also called histone code, and nucleosome remodeling.</text>
</comment>
<comment type="subunit">
    <text>The nucleosome is a histone octamer containing two molecules each of H2A, H2B, H3 and H4 assembled in one H3-H4 heterotetramer and two H2A-H2B heterodimers. The octamer wraps approximately 147 bp of DNA.</text>
</comment>
<comment type="subcellular location">
    <subcellularLocation>
        <location evidence="1">Nucleus</location>
    </subcellularLocation>
    <subcellularLocation>
        <location evidence="1">Chromosome</location>
    </subcellularLocation>
</comment>
<comment type="similarity">
    <text evidence="4">Belongs to the histone H4 family.</text>
</comment>